<reference key="1">
    <citation type="journal article" date="2003" name="Am. J. Phys. Anthropol.">
        <title>Evolution of a pigmentation gene, the melanocortin-1 receptor, in primates.</title>
        <authorList>
            <person name="Mundy N.I."/>
            <person name="Kelly J."/>
        </authorList>
    </citation>
    <scope>NUCLEOTIDE SEQUENCE [GENOMIC DNA]</scope>
    <source>
        <strain>Isolate 1</strain>
    </source>
</reference>
<reference key="2">
    <citation type="journal article" date="2008" name="Am. J. Primatol.">
        <title>Variation of the melanocortin 1 receptor gene in the macaques.</title>
        <authorList>
            <person name="Nakayama K."/>
            <person name="Shotake T."/>
            <person name="Takeneka O."/>
            <person name="Ishida T."/>
        </authorList>
    </citation>
    <scope>NUCLEOTIDE SEQUENCE [GENOMIC DNA]</scope>
</reference>
<organism>
    <name type="scientific">Erythrocebus patas</name>
    <name type="common">Red guenon</name>
    <name type="synonym">Cercopithecus patas</name>
    <dbReference type="NCBI Taxonomy" id="9538"/>
    <lineage>
        <taxon>Eukaryota</taxon>
        <taxon>Metazoa</taxon>
        <taxon>Chordata</taxon>
        <taxon>Craniata</taxon>
        <taxon>Vertebrata</taxon>
        <taxon>Euteleostomi</taxon>
        <taxon>Mammalia</taxon>
        <taxon>Eutheria</taxon>
        <taxon>Euarchontoglires</taxon>
        <taxon>Primates</taxon>
        <taxon>Haplorrhini</taxon>
        <taxon>Catarrhini</taxon>
        <taxon>Cercopithecidae</taxon>
        <taxon>Cercopithecinae</taxon>
        <taxon>Erythrocebus</taxon>
    </lineage>
</organism>
<dbReference type="EMBL" id="AY205094">
    <property type="protein sequence ID" value="AAP30968.1"/>
    <property type="molecule type" value="Genomic_DNA"/>
</dbReference>
<dbReference type="EMBL" id="AB296228">
    <property type="protein sequence ID" value="BAF48460.1"/>
    <property type="molecule type" value="Genomic_DNA"/>
</dbReference>
<dbReference type="SMR" id="Q864K3"/>
<dbReference type="GlyCosmos" id="Q864K3">
    <property type="glycosylation" value="1 site, No reported glycans"/>
</dbReference>
<dbReference type="GO" id="GO:0005886">
    <property type="term" value="C:plasma membrane"/>
    <property type="evidence" value="ECO:0000250"/>
    <property type="project" value="UniProtKB"/>
</dbReference>
<dbReference type="GO" id="GO:0004980">
    <property type="term" value="F:melanocyte-stimulating hormone receptor activity"/>
    <property type="evidence" value="ECO:0007669"/>
    <property type="project" value="InterPro"/>
</dbReference>
<dbReference type="GO" id="GO:0007189">
    <property type="term" value="P:adenylate cyclase-activating G protein-coupled receptor signaling pathway"/>
    <property type="evidence" value="ECO:0007669"/>
    <property type="project" value="UniProtKB-ARBA"/>
</dbReference>
<dbReference type="CDD" id="cd15351">
    <property type="entry name" value="7tmA_MC1R"/>
    <property type="match status" value="1"/>
</dbReference>
<dbReference type="FunFam" id="1.20.1070.10:FF:000211">
    <property type="entry name" value="Melanocyte-stimulating hormone receptor"/>
    <property type="match status" value="1"/>
</dbReference>
<dbReference type="Gene3D" id="1.20.1070.10">
    <property type="entry name" value="Rhodopsin 7-helix transmembrane proteins"/>
    <property type="match status" value="1"/>
</dbReference>
<dbReference type="InterPro" id="IPR000276">
    <property type="entry name" value="GPCR_Rhodpsn"/>
</dbReference>
<dbReference type="InterPro" id="IPR017452">
    <property type="entry name" value="GPCR_Rhodpsn_7TM"/>
</dbReference>
<dbReference type="InterPro" id="IPR001671">
    <property type="entry name" value="Melcrt_ACTH_rcpt"/>
</dbReference>
<dbReference type="InterPro" id="IPR000761">
    <property type="entry name" value="MSH_rcpt"/>
</dbReference>
<dbReference type="PANTHER" id="PTHR22750">
    <property type="entry name" value="G-PROTEIN COUPLED RECEPTOR"/>
    <property type="match status" value="1"/>
</dbReference>
<dbReference type="Pfam" id="PF00001">
    <property type="entry name" value="7tm_1"/>
    <property type="match status" value="1"/>
</dbReference>
<dbReference type="PRINTS" id="PR00237">
    <property type="entry name" value="GPCRRHODOPSN"/>
</dbReference>
<dbReference type="PRINTS" id="PR00534">
    <property type="entry name" value="MCRFAMILY"/>
</dbReference>
<dbReference type="PRINTS" id="PR00536">
    <property type="entry name" value="MELNOCYTESHR"/>
</dbReference>
<dbReference type="SMART" id="SM01381">
    <property type="entry name" value="7TM_GPCR_Srsx"/>
    <property type="match status" value="1"/>
</dbReference>
<dbReference type="SUPFAM" id="SSF81321">
    <property type="entry name" value="Family A G protein-coupled receptor-like"/>
    <property type="match status" value="1"/>
</dbReference>
<dbReference type="PROSITE" id="PS00237">
    <property type="entry name" value="G_PROTEIN_RECEP_F1_1"/>
    <property type="match status" value="1"/>
</dbReference>
<dbReference type="PROSITE" id="PS50262">
    <property type="entry name" value="G_PROTEIN_RECEP_F1_2"/>
    <property type="match status" value="1"/>
</dbReference>
<evidence type="ECO:0000250" key="1">
    <source>
        <dbReference type="UniProtKB" id="Q01726"/>
    </source>
</evidence>
<evidence type="ECO:0000255" key="2"/>
<evidence type="ECO:0000255" key="3">
    <source>
        <dbReference type="PROSITE-ProRule" id="PRU00521"/>
    </source>
</evidence>
<comment type="function">
    <text evidence="1">Receptor for MSH (alpha, beta and gamma) and ACTH. The activity of this receptor is mediated by G proteins which activate adenylate cyclase. Mediates melanogenesis, the production of eumelanin (black/brown) and phaeomelanin (red/yellow), via regulation of cAMP signaling in melanocytes.</text>
</comment>
<comment type="subunit">
    <text evidence="1">Interacts with MGRN1, but does not undergo MGRN1-mediated ubiquitination; this interaction competes with GNAS-binding and thus inhibits agonist-induced cAMP production. Interacts with OPN3; the interaction results in a decrease in MC1R-mediated cAMP signaling and ultimately a decrease in melanin production in melanocytes.</text>
</comment>
<comment type="subcellular location">
    <subcellularLocation>
        <location evidence="1">Cell membrane</location>
        <topology evidence="2">Multi-pass membrane protein</topology>
    </subcellularLocation>
</comment>
<comment type="similarity">
    <text evidence="3">Belongs to the G-protein coupled receptor 1 family.</text>
</comment>
<gene>
    <name type="primary">MC1R</name>
</gene>
<accession>Q864K3</accession>
<accession>A3KF97</accession>
<sequence>MPVQGSQRRLLGSLNSTPTATPHLGLAANQTGARCLEVSIPDGLFLSLGLVSLVENVLVVTAIAKNRNLHSPMYCFICCLALSDLLVSGSNMLETAVILLLEAGALAARAAVVQQLDNVIDVITCSSMLSSLCFLGAIAVDRYISIFYALRYHSIVTLPRARRAVAAIWVASVLFSMLFIAYYDHAAVLLCLVVFFLAMLVLMAVLYVHMLARACQHAQGIARLHKRQRPAHQSFGLKGAATLTILLGIFFLCWGPFFLHLTLIVLCPQHPTCSCIFKNFNLFLTLIICNAIIDPLIYAFRSQELRRTLKEVLLCSW</sequence>
<protein>
    <recommendedName>
        <fullName>Melanocyte-stimulating hormone receptor</fullName>
        <shortName>MSH-R</shortName>
    </recommendedName>
    <alternativeName>
        <fullName>Melanocortin receptor 1</fullName>
        <shortName>MC1-R</shortName>
    </alternativeName>
</protein>
<proteinExistence type="inferred from homology"/>
<feature type="chain" id="PRO_0000069810" description="Melanocyte-stimulating hormone receptor">
    <location>
        <begin position="1"/>
        <end position="317"/>
    </location>
</feature>
<feature type="topological domain" description="Extracellular" evidence="2">
    <location>
        <begin position="1"/>
        <end position="37"/>
    </location>
</feature>
<feature type="transmembrane region" description="Helical; Name=1" evidence="2">
    <location>
        <begin position="38"/>
        <end position="63"/>
    </location>
</feature>
<feature type="topological domain" description="Cytoplasmic" evidence="2">
    <location>
        <begin position="64"/>
        <end position="72"/>
    </location>
</feature>
<feature type="transmembrane region" description="Helical; Name=2" evidence="2">
    <location>
        <begin position="73"/>
        <end position="93"/>
    </location>
</feature>
<feature type="topological domain" description="Extracellular" evidence="2">
    <location>
        <begin position="94"/>
        <end position="118"/>
    </location>
</feature>
<feature type="transmembrane region" description="Helical; Name=3" evidence="2">
    <location>
        <begin position="119"/>
        <end position="140"/>
    </location>
</feature>
<feature type="topological domain" description="Cytoplasmic" evidence="2">
    <location>
        <begin position="141"/>
        <end position="163"/>
    </location>
</feature>
<feature type="transmembrane region" description="Helical; Name=4" evidence="2">
    <location>
        <begin position="164"/>
        <end position="183"/>
    </location>
</feature>
<feature type="topological domain" description="Extracellular" evidence="2">
    <location>
        <begin position="184"/>
        <end position="191"/>
    </location>
</feature>
<feature type="transmembrane region" description="Helical; Name=5" evidence="2">
    <location>
        <begin position="192"/>
        <end position="211"/>
    </location>
</feature>
<feature type="topological domain" description="Cytoplasmic" evidence="2">
    <location>
        <begin position="212"/>
        <end position="240"/>
    </location>
</feature>
<feature type="transmembrane region" description="Helical; Name=6" evidence="2">
    <location>
        <begin position="241"/>
        <end position="266"/>
    </location>
</feature>
<feature type="topological domain" description="Extracellular" evidence="2">
    <location>
        <begin position="267"/>
        <end position="279"/>
    </location>
</feature>
<feature type="transmembrane region" description="Helical; Name=7" evidence="2">
    <location>
        <begin position="280"/>
        <end position="300"/>
    </location>
</feature>
<feature type="topological domain" description="Cytoplasmic" evidence="2">
    <location>
        <begin position="301"/>
        <end position="317"/>
    </location>
</feature>
<feature type="lipid moiety-binding region" description="S-palmitoyl cysteine" evidence="2">
    <location>
        <position position="315"/>
    </location>
</feature>
<feature type="glycosylation site" description="N-linked (GlcNAc...) asparagine" evidence="2">
    <location>
        <position position="29"/>
    </location>
</feature>
<keyword id="KW-1003">Cell membrane</keyword>
<keyword id="KW-0297">G-protein coupled receptor</keyword>
<keyword id="KW-0325">Glycoprotein</keyword>
<keyword id="KW-0449">Lipoprotein</keyword>
<keyword id="KW-0472">Membrane</keyword>
<keyword id="KW-0564">Palmitate</keyword>
<keyword id="KW-0675">Receptor</keyword>
<keyword id="KW-0807">Transducer</keyword>
<keyword id="KW-0812">Transmembrane</keyword>
<keyword id="KW-1133">Transmembrane helix</keyword>
<name>MSHR_ERYPA</name>